<proteinExistence type="inferred from homology"/>
<feature type="chain" id="PRO_0000110674" description="Orotate phosphoribosyltransferase">
    <location>
        <begin position="1"/>
        <end position="231"/>
    </location>
</feature>
<feature type="binding site" description="in other chain" evidence="1">
    <location>
        <position position="27"/>
    </location>
    <ligand>
        <name>5-phospho-alpha-D-ribose 1-diphosphate</name>
        <dbReference type="ChEBI" id="CHEBI:58017"/>
        <note>ligand shared between dimeric partners</note>
    </ligand>
</feature>
<feature type="binding site" description="in other chain" evidence="1">
    <location>
        <begin position="79"/>
        <end position="80"/>
    </location>
    <ligand>
        <name>5-phospho-alpha-D-ribose 1-diphosphate</name>
        <dbReference type="ChEBI" id="CHEBI:58017"/>
        <note>ligand shared between dimeric partners</note>
    </ligand>
</feature>
<feature type="binding site" evidence="1">
    <location>
        <position position="106"/>
    </location>
    <ligand>
        <name>5-phospho-alpha-D-ribose 1-diphosphate</name>
        <dbReference type="ChEBI" id="CHEBI:58017"/>
        <note>ligand shared between dimeric partners</note>
    </ligand>
</feature>
<feature type="binding site" description="in other chain" evidence="1">
    <location>
        <position position="107"/>
    </location>
    <ligand>
        <name>5-phospho-alpha-D-ribose 1-diphosphate</name>
        <dbReference type="ChEBI" id="CHEBI:58017"/>
        <note>ligand shared between dimeric partners</note>
    </ligand>
</feature>
<feature type="binding site" evidence="1">
    <location>
        <position position="110"/>
    </location>
    <ligand>
        <name>5-phospho-alpha-D-ribose 1-diphosphate</name>
        <dbReference type="ChEBI" id="CHEBI:58017"/>
        <note>ligand shared between dimeric partners</note>
    </ligand>
</feature>
<feature type="binding site" evidence="1">
    <location>
        <position position="112"/>
    </location>
    <ligand>
        <name>5-phospho-alpha-D-ribose 1-diphosphate</name>
        <dbReference type="ChEBI" id="CHEBI:58017"/>
        <note>ligand shared between dimeric partners</note>
    </ligand>
</feature>
<feature type="binding site" description="in other chain" evidence="1">
    <location>
        <begin position="133"/>
        <end position="141"/>
    </location>
    <ligand>
        <name>5-phospho-alpha-D-ribose 1-diphosphate</name>
        <dbReference type="ChEBI" id="CHEBI:58017"/>
        <note>ligand shared between dimeric partners</note>
    </ligand>
</feature>
<feature type="binding site" evidence="1">
    <location>
        <position position="137"/>
    </location>
    <ligand>
        <name>orotate</name>
        <dbReference type="ChEBI" id="CHEBI:30839"/>
    </ligand>
</feature>
<feature type="binding site" evidence="1">
    <location>
        <position position="166"/>
    </location>
    <ligand>
        <name>orotate</name>
        <dbReference type="ChEBI" id="CHEBI:30839"/>
    </ligand>
</feature>
<gene>
    <name evidence="1" type="primary">pyrE</name>
    <name type="ordered locus">BL0788</name>
</gene>
<organism>
    <name type="scientific">Bifidobacterium longum (strain NCC 2705)</name>
    <dbReference type="NCBI Taxonomy" id="206672"/>
    <lineage>
        <taxon>Bacteria</taxon>
        <taxon>Bacillati</taxon>
        <taxon>Actinomycetota</taxon>
        <taxon>Actinomycetes</taxon>
        <taxon>Bifidobacteriales</taxon>
        <taxon>Bifidobacteriaceae</taxon>
        <taxon>Bifidobacterium</taxon>
    </lineage>
</organism>
<dbReference type="EC" id="2.4.2.10" evidence="1"/>
<dbReference type="EMBL" id="AE014295">
    <property type="protein sequence ID" value="AAN24603.1"/>
    <property type="molecule type" value="Genomic_DNA"/>
</dbReference>
<dbReference type="RefSeq" id="NP_695967.1">
    <property type="nucleotide sequence ID" value="NC_004307.2"/>
</dbReference>
<dbReference type="RefSeq" id="WP_007052229.1">
    <property type="nucleotide sequence ID" value="NC_004307.2"/>
</dbReference>
<dbReference type="SMR" id="Q8G661"/>
<dbReference type="STRING" id="206672.BL0788"/>
<dbReference type="EnsemblBacteria" id="AAN24603">
    <property type="protein sequence ID" value="AAN24603"/>
    <property type="gene ID" value="BL0788"/>
</dbReference>
<dbReference type="GeneID" id="69578059"/>
<dbReference type="KEGG" id="blo:BL0788"/>
<dbReference type="PATRIC" id="fig|206672.9.peg.489"/>
<dbReference type="HOGENOM" id="CLU_074878_0_1_11"/>
<dbReference type="OrthoDB" id="9779060at2"/>
<dbReference type="PhylomeDB" id="Q8G661"/>
<dbReference type="UniPathway" id="UPA00070">
    <property type="reaction ID" value="UER00119"/>
</dbReference>
<dbReference type="Proteomes" id="UP000000439">
    <property type="component" value="Chromosome"/>
</dbReference>
<dbReference type="GO" id="GO:0005737">
    <property type="term" value="C:cytoplasm"/>
    <property type="evidence" value="ECO:0007669"/>
    <property type="project" value="TreeGrafter"/>
</dbReference>
<dbReference type="GO" id="GO:0000287">
    <property type="term" value="F:magnesium ion binding"/>
    <property type="evidence" value="ECO:0007669"/>
    <property type="project" value="UniProtKB-UniRule"/>
</dbReference>
<dbReference type="GO" id="GO:0004588">
    <property type="term" value="F:orotate phosphoribosyltransferase activity"/>
    <property type="evidence" value="ECO:0007669"/>
    <property type="project" value="UniProtKB-UniRule"/>
</dbReference>
<dbReference type="GO" id="GO:0006207">
    <property type="term" value="P:'de novo' pyrimidine nucleobase biosynthetic process"/>
    <property type="evidence" value="ECO:0007669"/>
    <property type="project" value="TreeGrafter"/>
</dbReference>
<dbReference type="GO" id="GO:0044205">
    <property type="term" value="P:'de novo' UMP biosynthetic process"/>
    <property type="evidence" value="ECO:0007669"/>
    <property type="project" value="UniProtKB-UniRule"/>
</dbReference>
<dbReference type="GO" id="GO:0046132">
    <property type="term" value="P:pyrimidine ribonucleoside biosynthetic process"/>
    <property type="evidence" value="ECO:0007669"/>
    <property type="project" value="TreeGrafter"/>
</dbReference>
<dbReference type="CDD" id="cd06223">
    <property type="entry name" value="PRTases_typeI"/>
    <property type="match status" value="1"/>
</dbReference>
<dbReference type="Gene3D" id="3.40.50.2020">
    <property type="match status" value="1"/>
</dbReference>
<dbReference type="HAMAP" id="MF_01208">
    <property type="entry name" value="PyrE"/>
    <property type="match status" value="1"/>
</dbReference>
<dbReference type="InterPro" id="IPR023031">
    <property type="entry name" value="OPRT"/>
</dbReference>
<dbReference type="InterPro" id="IPR004467">
    <property type="entry name" value="Or_phspho_trans_dom"/>
</dbReference>
<dbReference type="InterPro" id="IPR000836">
    <property type="entry name" value="PRibTrfase_dom"/>
</dbReference>
<dbReference type="InterPro" id="IPR029057">
    <property type="entry name" value="PRTase-like"/>
</dbReference>
<dbReference type="NCBIfam" id="TIGR00336">
    <property type="entry name" value="pyrE"/>
    <property type="match status" value="1"/>
</dbReference>
<dbReference type="PANTHER" id="PTHR46683">
    <property type="entry name" value="OROTATE PHOSPHORIBOSYLTRANSFERASE 1-RELATED"/>
    <property type="match status" value="1"/>
</dbReference>
<dbReference type="PANTHER" id="PTHR46683:SF1">
    <property type="entry name" value="OROTATE PHOSPHORIBOSYLTRANSFERASE 1-RELATED"/>
    <property type="match status" value="1"/>
</dbReference>
<dbReference type="Pfam" id="PF00156">
    <property type="entry name" value="Pribosyltran"/>
    <property type="match status" value="1"/>
</dbReference>
<dbReference type="SUPFAM" id="SSF53271">
    <property type="entry name" value="PRTase-like"/>
    <property type="match status" value="1"/>
</dbReference>
<dbReference type="PROSITE" id="PS00103">
    <property type="entry name" value="PUR_PYR_PR_TRANSFER"/>
    <property type="match status" value="1"/>
</dbReference>
<keyword id="KW-0328">Glycosyltransferase</keyword>
<keyword id="KW-0460">Magnesium</keyword>
<keyword id="KW-0665">Pyrimidine biosynthesis</keyword>
<keyword id="KW-1185">Reference proteome</keyword>
<keyword id="KW-0808">Transferase</keyword>
<evidence type="ECO:0000255" key="1">
    <source>
        <dbReference type="HAMAP-Rule" id="MF_01208"/>
    </source>
</evidence>
<accession>Q8G661</accession>
<protein>
    <recommendedName>
        <fullName evidence="1">Orotate phosphoribosyltransferase</fullName>
        <shortName evidence="1">OPRT</shortName>
        <shortName evidence="1">OPRTase</shortName>
        <ecNumber evidence="1">2.4.2.10</ecNumber>
    </recommendedName>
</protein>
<reference key="1">
    <citation type="journal article" date="2002" name="Proc. Natl. Acad. Sci. U.S.A.">
        <title>The genome sequence of Bifidobacterium longum reflects its adaptation to the human gastrointestinal tract.</title>
        <authorList>
            <person name="Schell M.A."/>
            <person name="Karmirantzou M."/>
            <person name="Snel B."/>
            <person name="Vilanova D."/>
            <person name="Berger B."/>
            <person name="Pessi G."/>
            <person name="Zwahlen M.-C."/>
            <person name="Desiere F."/>
            <person name="Bork P."/>
            <person name="Delley M."/>
            <person name="Pridmore R.D."/>
            <person name="Arigoni F."/>
        </authorList>
    </citation>
    <scope>NUCLEOTIDE SEQUENCE [LARGE SCALE GENOMIC DNA]</scope>
    <source>
        <strain>NCC 2705</strain>
    </source>
</reference>
<comment type="function">
    <text evidence="1">Catalyzes the transfer of a ribosyl phosphate group from 5-phosphoribose 1-diphosphate to orotate, leading to the formation of orotidine monophosphate (OMP).</text>
</comment>
<comment type="catalytic activity">
    <reaction evidence="1">
        <text>orotidine 5'-phosphate + diphosphate = orotate + 5-phospho-alpha-D-ribose 1-diphosphate</text>
        <dbReference type="Rhea" id="RHEA:10380"/>
        <dbReference type="ChEBI" id="CHEBI:30839"/>
        <dbReference type="ChEBI" id="CHEBI:33019"/>
        <dbReference type="ChEBI" id="CHEBI:57538"/>
        <dbReference type="ChEBI" id="CHEBI:58017"/>
        <dbReference type="EC" id="2.4.2.10"/>
    </reaction>
</comment>
<comment type="cofactor">
    <cofactor evidence="1">
        <name>Mg(2+)</name>
        <dbReference type="ChEBI" id="CHEBI:18420"/>
    </cofactor>
</comment>
<comment type="pathway">
    <text evidence="1">Pyrimidine metabolism; UMP biosynthesis via de novo pathway; UMP from orotate: step 1/2.</text>
</comment>
<comment type="subunit">
    <text evidence="1">Homodimer.</text>
</comment>
<comment type="similarity">
    <text evidence="1">Belongs to the purine/pyrimidine phosphoribosyltransferase family. PyrE subfamily.</text>
</comment>
<name>PYRE_BIFLO</name>
<sequence>MAETLAHRFTEFLLESNALKFGDFTLKSGRKSPYFINAGAFDDGKKIAALGAFYAEKISQAIVHNTIPRNIDTVFGPAYKGIPLAVSTAIALTAGHNMTVGYTFDRKEKKDHGDGGWMVGTPLTDGMKVLLVDDVMTAGTAVREVIPKLKAEANVEVVGLVLSVDRMEKTKDSDMSAVKAVEAEFGFPVLSIANVREIFDAAAKMKNPDGTPLLSHDIQQRAAAYLEEYGA</sequence>